<keyword id="KW-0488">Methylation</keyword>
<keyword id="KW-0687">Ribonucleoprotein</keyword>
<keyword id="KW-0689">Ribosomal protein</keyword>
<keyword id="KW-0694">RNA-binding</keyword>
<keyword id="KW-0699">rRNA-binding</keyword>
<accession>Q1CCU4</accession>
<accession>D1Q2M1</accession>
<proteinExistence type="inferred from homology"/>
<evidence type="ECO:0000255" key="1">
    <source>
        <dbReference type="HAMAP-Rule" id="MF_01325"/>
    </source>
</evidence>
<evidence type="ECO:0000256" key="2">
    <source>
        <dbReference type="SAM" id="MobiDB-lite"/>
    </source>
</evidence>
<evidence type="ECO:0000305" key="3"/>
<sequence>MIGLVGKKVGMTRIFTEDGVSIPVTVIEIEANRVTQVKSLENDGYRAVQVTTGAKKANRVTKPEAGHFAKAGVEAGRGLWEFRLPEGQEFTAGQEISVEIFADVKKVDVTGTSKGKGFAGTVKRWNFRTQDATHGNSLSHRVPGSIGQNQTPGKVFKGKKMAGHMGDERVTVQSLDVVRVDAERNLLLVKGAVPGATGGNLIVKPAVKA</sequence>
<reference key="1">
    <citation type="journal article" date="2006" name="J. Bacteriol.">
        <title>Complete genome sequence of Yersinia pestis strains Antiqua and Nepal516: evidence of gene reduction in an emerging pathogen.</title>
        <authorList>
            <person name="Chain P.S.G."/>
            <person name="Hu P."/>
            <person name="Malfatti S.A."/>
            <person name="Radnedge L."/>
            <person name="Larimer F."/>
            <person name="Vergez L.M."/>
            <person name="Worsham P."/>
            <person name="Chu M.C."/>
            <person name="Andersen G.L."/>
        </authorList>
    </citation>
    <scope>NUCLEOTIDE SEQUENCE [LARGE SCALE GENOMIC DNA]</scope>
    <source>
        <strain>Nepal516</strain>
    </source>
</reference>
<reference key="2">
    <citation type="submission" date="2009-04" db="EMBL/GenBank/DDBJ databases">
        <title>Yersinia pestis Nepal516A whole genome shotgun sequencing project.</title>
        <authorList>
            <person name="Plunkett G. III"/>
            <person name="Anderson B.D."/>
            <person name="Baumler D.J."/>
            <person name="Burland V."/>
            <person name="Cabot E.L."/>
            <person name="Glasner J.D."/>
            <person name="Mau B."/>
            <person name="Neeno-Eckwall E."/>
            <person name="Perna N.T."/>
            <person name="Munk A.C."/>
            <person name="Tapia R."/>
            <person name="Green L.D."/>
            <person name="Rogers Y.C."/>
            <person name="Detter J.C."/>
            <person name="Bruce D.C."/>
            <person name="Brettin T.S."/>
        </authorList>
    </citation>
    <scope>NUCLEOTIDE SEQUENCE [LARGE SCALE GENOMIC DNA]</scope>
    <source>
        <strain>Nepal516</strain>
    </source>
</reference>
<gene>
    <name evidence="1" type="primary">rplC</name>
    <name type="ordered locus">YPN_3859</name>
    <name type="ORF">YP516_4382</name>
</gene>
<feature type="chain" id="PRO_1000052169" description="Large ribosomal subunit protein uL3">
    <location>
        <begin position="1"/>
        <end position="209"/>
    </location>
</feature>
<feature type="region of interest" description="Disordered" evidence="2">
    <location>
        <begin position="133"/>
        <end position="152"/>
    </location>
</feature>
<feature type="modified residue" description="N5-methylglutamine" evidence="1">
    <location>
        <position position="150"/>
    </location>
</feature>
<protein>
    <recommendedName>
        <fullName evidence="1">Large ribosomal subunit protein uL3</fullName>
    </recommendedName>
    <alternativeName>
        <fullName evidence="3">50S ribosomal protein L3</fullName>
    </alternativeName>
</protein>
<comment type="function">
    <text evidence="1">One of the primary rRNA binding proteins, it binds directly near the 3'-end of the 23S rRNA, where it nucleates assembly of the 50S subunit.</text>
</comment>
<comment type="subunit">
    <text evidence="1">Part of the 50S ribosomal subunit. Forms a cluster with proteins L14 and L19.</text>
</comment>
<comment type="PTM">
    <text evidence="1">Methylated by PrmB.</text>
</comment>
<comment type="similarity">
    <text evidence="1">Belongs to the universal ribosomal protein uL3 family.</text>
</comment>
<organism>
    <name type="scientific">Yersinia pestis bv. Antiqua (strain Nepal516)</name>
    <dbReference type="NCBI Taxonomy" id="377628"/>
    <lineage>
        <taxon>Bacteria</taxon>
        <taxon>Pseudomonadati</taxon>
        <taxon>Pseudomonadota</taxon>
        <taxon>Gammaproteobacteria</taxon>
        <taxon>Enterobacterales</taxon>
        <taxon>Yersiniaceae</taxon>
        <taxon>Yersinia</taxon>
    </lineage>
</organism>
<name>RL3_YERPN</name>
<dbReference type="EMBL" id="CP000305">
    <property type="protein sequence ID" value="ABG20186.1"/>
    <property type="molecule type" value="Genomic_DNA"/>
</dbReference>
<dbReference type="EMBL" id="ACNQ01000019">
    <property type="protein sequence ID" value="EEO74774.1"/>
    <property type="molecule type" value="Genomic_DNA"/>
</dbReference>
<dbReference type="RefSeq" id="WP_002218932.1">
    <property type="nucleotide sequence ID" value="NZ_ACNQ01000019.1"/>
</dbReference>
<dbReference type="SMR" id="Q1CCU4"/>
<dbReference type="GeneID" id="96663196"/>
<dbReference type="KEGG" id="ypn:YPN_3859"/>
<dbReference type="HOGENOM" id="CLU_044142_4_1_6"/>
<dbReference type="Proteomes" id="UP000008936">
    <property type="component" value="Chromosome"/>
</dbReference>
<dbReference type="GO" id="GO:0022625">
    <property type="term" value="C:cytosolic large ribosomal subunit"/>
    <property type="evidence" value="ECO:0007669"/>
    <property type="project" value="TreeGrafter"/>
</dbReference>
<dbReference type="GO" id="GO:0019843">
    <property type="term" value="F:rRNA binding"/>
    <property type="evidence" value="ECO:0007669"/>
    <property type="project" value="UniProtKB-UniRule"/>
</dbReference>
<dbReference type="GO" id="GO:0003735">
    <property type="term" value="F:structural constituent of ribosome"/>
    <property type="evidence" value="ECO:0007669"/>
    <property type="project" value="InterPro"/>
</dbReference>
<dbReference type="GO" id="GO:0006412">
    <property type="term" value="P:translation"/>
    <property type="evidence" value="ECO:0007669"/>
    <property type="project" value="UniProtKB-UniRule"/>
</dbReference>
<dbReference type="FunFam" id="2.40.30.10:FF:000004">
    <property type="entry name" value="50S ribosomal protein L3"/>
    <property type="match status" value="1"/>
</dbReference>
<dbReference type="FunFam" id="3.30.160.810:FF:000001">
    <property type="entry name" value="50S ribosomal protein L3"/>
    <property type="match status" value="1"/>
</dbReference>
<dbReference type="Gene3D" id="3.30.160.810">
    <property type="match status" value="1"/>
</dbReference>
<dbReference type="Gene3D" id="2.40.30.10">
    <property type="entry name" value="Translation factors"/>
    <property type="match status" value="1"/>
</dbReference>
<dbReference type="HAMAP" id="MF_01325_B">
    <property type="entry name" value="Ribosomal_uL3_B"/>
    <property type="match status" value="1"/>
</dbReference>
<dbReference type="InterPro" id="IPR000597">
    <property type="entry name" value="Ribosomal_uL3"/>
</dbReference>
<dbReference type="InterPro" id="IPR019927">
    <property type="entry name" value="Ribosomal_uL3_bac/org-type"/>
</dbReference>
<dbReference type="InterPro" id="IPR019926">
    <property type="entry name" value="Ribosomal_uL3_CS"/>
</dbReference>
<dbReference type="InterPro" id="IPR009000">
    <property type="entry name" value="Transl_B-barrel_sf"/>
</dbReference>
<dbReference type="NCBIfam" id="TIGR03625">
    <property type="entry name" value="L3_bact"/>
    <property type="match status" value="1"/>
</dbReference>
<dbReference type="PANTHER" id="PTHR11229">
    <property type="entry name" value="50S RIBOSOMAL PROTEIN L3"/>
    <property type="match status" value="1"/>
</dbReference>
<dbReference type="PANTHER" id="PTHR11229:SF16">
    <property type="entry name" value="LARGE RIBOSOMAL SUBUNIT PROTEIN UL3C"/>
    <property type="match status" value="1"/>
</dbReference>
<dbReference type="Pfam" id="PF00297">
    <property type="entry name" value="Ribosomal_L3"/>
    <property type="match status" value="1"/>
</dbReference>
<dbReference type="SUPFAM" id="SSF50447">
    <property type="entry name" value="Translation proteins"/>
    <property type="match status" value="1"/>
</dbReference>
<dbReference type="PROSITE" id="PS00474">
    <property type="entry name" value="RIBOSOMAL_L3"/>
    <property type="match status" value="1"/>
</dbReference>